<accession>C5CLQ3</accession>
<reference key="1">
    <citation type="journal article" date="2011" name="J. Bacteriol.">
        <title>Complete genome sequence of the metabolically versatile plant growth-promoting endophyte, Variovorax paradoxus S110.</title>
        <authorList>
            <person name="Han J.I."/>
            <person name="Choi H.K."/>
            <person name="Lee S.W."/>
            <person name="Orwin P.M."/>
            <person name="Kim J."/>
            <person name="Laroe S.L."/>
            <person name="Kim T.G."/>
            <person name="O'Neil J."/>
            <person name="Leadbetter J.R."/>
            <person name="Lee S.Y."/>
            <person name="Hur C.G."/>
            <person name="Spain J.C."/>
            <person name="Ovchinnikova G."/>
            <person name="Goodwin L."/>
            <person name="Han C."/>
        </authorList>
    </citation>
    <scope>NUCLEOTIDE SEQUENCE [LARGE SCALE GENOMIC DNA]</scope>
    <source>
        <strain>S110</strain>
    </source>
</reference>
<protein>
    <recommendedName>
        <fullName evidence="1">Oxygen-dependent coproporphyrinogen-III oxidase</fullName>
        <shortName evidence="1">CPO</shortName>
        <shortName evidence="1">Coprogen oxidase</shortName>
        <shortName evidence="1">Coproporphyrinogenase</shortName>
        <ecNumber evidence="1">1.3.3.3</ecNumber>
    </recommendedName>
</protein>
<proteinExistence type="inferred from homology"/>
<gene>
    <name evidence="1" type="primary">hemF</name>
    <name type="ordered locus">Vapar_2685</name>
</gene>
<evidence type="ECO:0000255" key="1">
    <source>
        <dbReference type="HAMAP-Rule" id="MF_00333"/>
    </source>
</evidence>
<feature type="chain" id="PRO_1000205207" description="Oxygen-dependent coproporphyrinogen-III oxidase">
    <location>
        <begin position="1"/>
        <end position="305"/>
    </location>
</feature>
<feature type="region of interest" description="Important for dimerization" evidence="1">
    <location>
        <begin position="245"/>
        <end position="280"/>
    </location>
</feature>
<feature type="active site" description="Proton donor" evidence="1">
    <location>
        <position position="111"/>
    </location>
</feature>
<feature type="binding site" evidence="1">
    <location>
        <position position="97"/>
    </location>
    <ligand>
        <name>substrate</name>
    </ligand>
</feature>
<feature type="binding site" evidence="1">
    <location>
        <position position="101"/>
    </location>
    <ligand>
        <name>a divalent metal cation</name>
        <dbReference type="ChEBI" id="CHEBI:60240"/>
    </ligand>
</feature>
<feature type="binding site" evidence="1">
    <location>
        <position position="111"/>
    </location>
    <ligand>
        <name>a divalent metal cation</name>
        <dbReference type="ChEBI" id="CHEBI:60240"/>
    </ligand>
</feature>
<feature type="binding site" evidence="1">
    <location>
        <begin position="113"/>
        <end position="115"/>
    </location>
    <ligand>
        <name>substrate</name>
    </ligand>
</feature>
<feature type="binding site" evidence="1">
    <location>
        <position position="150"/>
    </location>
    <ligand>
        <name>a divalent metal cation</name>
        <dbReference type="ChEBI" id="CHEBI:60240"/>
    </ligand>
</feature>
<feature type="binding site" evidence="1">
    <location>
        <position position="180"/>
    </location>
    <ligand>
        <name>a divalent metal cation</name>
        <dbReference type="ChEBI" id="CHEBI:60240"/>
    </ligand>
</feature>
<feature type="binding site" evidence="1">
    <location>
        <begin position="263"/>
        <end position="265"/>
    </location>
    <ligand>
        <name>substrate</name>
    </ligand>
</feature>
<feature type="site" description="Important for dimerization" evidence="1">
    <location>
        <position position="180"/>
    </location>
</feature>
<dbReference type="EC" id="1.3.3.3" evidence="1"/>
<dbReference type="EMBL" id="CP001635">
    <property type="protein sequence ID" value="ACS19310.1"/>
    <property type="molecule type" value="Genomic_DNA"/>
</dbReference>
<dbReference type="SMR" id="C5CLQ3"/>
<dbReference type="STRING" id="543728.Vapar_2685"/>
<dbReference type="KEGG" id="vap:Vapar_2685"/>
<dbReference type="eggNOG" id="COG0408">
    <property type="taxonomic scope" value="Bacteria"/>
</dbReference>
<dbReference type="HOGENOM" id="CLU_026169_0_1_4"/>
<dbReference type="OrthoDB" id="9777553at2"/>
<dbReference type="UniPathway" id="UPA00251">
    <property type="reaction ID" value="UER00322"/>
</dbReference>
<dbReference type="GO" id="GO:0005737">
    <property type="term" value="C:cytoplasm"/>
    <property type="evidence" value="ECO:0007669"/>
    <property type="project" value="UniProtKB-SubCell"/>
</dbReference>
<dbReference type="GO" id="GO:0004109">
    <property type="term" value="F:coproporphyrinogen oxidase activity"/>
    <property type="evidence" value="ECO:0007669"/>
    <property type="project" value="UniProtKB-UniRule"/>
</dbReference>
<dbReference type="GO" id="GO:0046872">
    <property type="term" value="F:metal ion binding"/>
    <property type="evidence" value="ECO:0007669"/>
    <property type="project" value="UniProtKB-KW"/>
</dbReference>
<dbReference type="GO" id="GO:0042803">
    <property type="term" value="F:protein homodimerization activity"/>
    <property type="evidence" value="ECO:0000250"/>
    <property type="project" value="UniProtKB"/>
</dbReference>
<dbReference type="GO" id="GO:0006782">
    <property type="term" value="P:protoporphyrinogen IX biosynthetic process"/>
    <property type="evidence" value="ECO:0007669"/>
    <property type="project" value="UniProtKB-UniRule"/>
</dbReference>
<dbReference type="FunFam" id="3.40.1500.10:FF:000001">
    <property type="entry name" value="Oxygen-dependent coproporphyrinogen-III oxidase"/>
    <property type="match status" value="1"/>
</dbReference>
<dbReference type="Gene3D" id="3.40.1500.10">
    <property type="entry name" value="Coproporphyrinogen III oxidase, aerobic"/>
    <property type="match status" value="1"/>
</dbReference>
<dbReference type="HAMAP" id="MF_00333">
    <property type="entry name" value="Coprogen_oxidas"/>
    <property type="match status" value="1"/>
</dbReference>
<dbReference type="InterPro" id="IPR001260">
    <property type="entry name" value="Coprogen_oxidase_aer"/>
</dbReference>
<dbReference type="InterPro" id="IPR036406">
    <property type="entry name" value="Coprogen_oxidase_aer_sf"/>
</dbReference>
<dbReference type="InterPro" id="IPR018375">
    <property type="entry name" value="Coprogen_oxidase_CS"/>
</dbReference>
<dbReference type="NCBIfam" id="NF003727">
    <property type="entry name" value="PRK05330.1"/>
    <property type="match status" value="1"/>
</dbReference>
<dbReference type="PANTHER" id="PTHR10755">
    <property type="entry name" value="COPROPORPHYRINOGEN III OXIDASE, MITOCHONDRIAL"/>
    <property type="match status" value="1"/>
</dbReference>
<dbReference type="PANTHER" id="PTHR10755:SF0">
    <property type="entry name" value="OXYGEN-DEPENDENT COPROPORPHYRINOGEN-III OXIDASE, MITOCHONDRIAL"/>
    <property type="match status" value="1"/>
</dbReference>
<dbReference type="Pfam" id="PF01218">
    <property type="entry name" value="Coprogen_oxidas"/>
    <property type="match status" value="1"/>
</dbReference>
<dbReference type="PIRSF" id="PIRSF000166">
    <property type="entry name" value="Coproporphyri_ox"/>
    <property type="match status" value="1"/>
</dbReference>
<dbReference type="PRINTS" id="PR00073">
    <property type="entry name" value="COPRGNOXDASE"/>
</dbReference>
<dbReference type="SUPFAM" id="SSF102886">
    <property type="entry name" value="Coproporphyrinogen III oxidase"/>
    <property type="match status" value="1"/>
</dbReference>
<dbReference type="PROSITE" id="PS01021">
    <property type="entry name" value="COPROGEN_OXIDASE"/>
    <property type="match status" value="1"/>
</dbReference>
<organism>
    <name type="scientific">Variovorax paradoxus (strain S110)</name>
    <dbReference type="NCBI Taxonomy" id="543728"/>
    <lineage>
        <taxon>Bacteria</taxon>
        <taxon>Pseudomonadati</taxon>
        <taxon>Pseudomonadota</taxon>
        <taxon>Betaproteobacteria</taxon>
        <taxon>Burkholderiales</taxon>
        <taxon>Comamonadaceae</taxon>
        <taxon>Variovorax</taxon>
    </lineage>
</organism>
<keyword id="KW-0963">Cytoplasm</keyword>
<keyword id="KW-0350">Heme biosynthesis</keyword>
<keyword id="KW-0479">Metal-binding</keyword>
<keyword id="KW-0560">Oxidoreductase</keyword>
<keyword id="KW-0627">Porphyrin biosynthesis</keyword>
<name>HEM6_VARPS</name>
<sequence>MQQTNPAAVGDYLRKLQQEIVAAVEAADGGTCVRDAWQKEPGEALQGSGLTCILEGGALFERAGCGFSQVRGPRLPPSATQNRPELAGAPFEAMGVSLVFHPRNPYVPIVHMNVRMLAALPEGKDPVCWFGGGMDLTPCYGFEDDAVHFHTVCRDALAPFGDDKYPRFKTWCDEYFFLKHRNEQRGIGGIFFDDFAEGGFDNGFALLRSVGNAFLPAYLPIIERRRAMPWGERERAFQLYRRGRYVEFNLVWDRGTHFGLQSGGRTESILLSMPPLASWAYQQQPEPGSPEAALYSDFIVRRDWL</sequence>
<comment type="function">
    <text evidence="1">Involved in the heme biosynthesis. Catalyzes the aerobic oxidative decarboxylation of propionate groups of rings A and B of coproporphyrinogen-III to yield the vinyl groups in protoporphyrinogen-IX.</text>
</comment>
<comment type="catalytic activity">
    <reaction evidence="1">
        <text>coproporphyrinogen III + O2 + 2 H(+) = protoporphyrinogen IX + 2 CO2 + 2 H2O</text>
        <dbReference type="Rhea" id="RHEA:18257"/>
        <dbReference type="ChEBI" id="CHEBI:15377"/>
        <dbReference type="ChEBI" id="CHEBI:15378"/>
        <dbReference type="ChEBI" id="CHEBI:15379"/>
        <dbReference type="ChEBI" id="CHEBI:16526"/>
        <dbReference type="ChEBI" id="CHEBI:57307"/>
        <dbReference type="ChEBI" id="CHEBI:57309"/>
        <dbReference type="EC" id="1.3.3.3"/>
    </reaction>
</comment>
<comment type="cofactor">
    <cofactor evidence="1">
        <name>a divalent metal cation</name>
        <dbReference type="ChEBI" id="CHEBI:60240"/>
    </cofactor>
</comment>
<comment type="pathway">
    <text evidence="1">Porphyrin-containing compound metabolism; protoporphyrin-IX biosynthesis; protoporphyrinogen-IX from coproporphyrinogen-III (O2 route): step 1/1.</text>
</comment>
<comment type="subunit">
    <text evidence="1">Homodimer.</text>
</comment>
<comment type="subcellular location">
    <subcellularLocation>
        <location evidence="1">Cytoplasm</location>
    </subcellularLocation>
</comment>
<comment type="similarity">
    <text evidence="1">Belongs to the aerobic coproporphyrinogen-III oxidase family.</text>
</comment>